<comment type="function">
    <text evidence="1 2 4">Functions as an intracellular arginine sensor within the amino acid-sensing branch of the TORC1 signaling pathway (PubMed:26972053, PubMed:27487210, PubMed:33594058). As a homodimer or a heterodimer with CASTOR2, binds and inhibits the GATOR subcomplex GATOR2 and thereby mTORC1 (PubMed:26972053, PubMed:27487210, PubMed:33594058). Binding of arginine to CASTOR1 allosterically disrupts the interaction of CASTOR1-containing dimers with GATOR2 which can in turn activate mTORC1 and the TORC1 signaling pathway (PubMed:26972053, PubMed:27487210, PubMed:33594058).</text>
</comment>
<comment type="subunit">
    <text evidence="1 2 3 4">Forms homodimers and heterodimers with CASTOR2 (PubMed:26972053, PubMed:27487210). Interacts with the GATOR2 complex which is composed of MIOS, SEC13, SEH1L, WDR24 and WDR59; the interaction is negatively regulated by arginine (PubMed:26972053, PubMed:27487210, PubMed:33594058). Interacts with TM4SF5; the interaction is positively regulated by leucine and is negatively regulated by arginine (PubMed:30956113).</text>
</comment>
<comment type="interaction">
    <interactant intactId="EBI-10276168">
        <id>Q8WTX7</id>
    </interactant>
    <interactant intactId="EBI-10276168">
        <id>Q8WTX7</id>
        <label>CASTOR1</label>
    </interactant>
    <organismsDiffer>false</organismsDiffer>
    <experiments>8</experiments>
</comment>
<comment type="interaction">
    <interactant intactId="EBI-10276168">
        <id>Q8WTX7</id>
    </interactant>
    <interactant intactId="EBI-11102839">
        <id>A6NHX0</id>
        <label>CASTOR2</label>
    </interactant>
    <organismsDiffer>false</organismsDiffer>
    <experiments>11</experiments>
</comment>
<comment type="interaction">
    <interactant intactId="EBI-10276168">
        <id>Q8WTX7</id>
    </interactant>
    <interactant intactId="EBI-2515122">
        <id>Q9NXC5</id>
        <label>MIOS</label>
    </interactant>
    <organismsDiffer>false</organismsDiffer>
    <experiments>7</experiments>
</comment>
<comment type="interaction">
    <interactant intactId="EBI-10276168">
        <id>Q8WTX7</id>
    </interactant>
    <interactant intactId="EBI-752143">
        <id>Q16401</id>
        <label>PSMD5</label>
    </interactant>
    <organismsDiffer>false</organismsDiffer>
    <experiments>3</experiments>
</comment>
<comment type="interaction">
    <interactant intactId="EBI-10276168">
        <id>Q8WTX7</id>
    </interactant>
    <interactant intactId="EBI-19125949">
        <id>O14894</id>
        <label>TM4SF5</label>
    </interactant>
    <organismsDiffer>false</organismsDiffer>
    <experiments>2</experiments>
</comment>
<comment type="interaction">
    <interactant intactId="EBI-10276168">
        <id>Q8WTX7</id>
    </interactant>
    <interactant intactId="EBI-1045338">
        <id>Q96EY4</id>
        <label>TMA16</label>
    </interactant>
    <organismsDiffer>false</organismsDiffer>
    <experiments>3</experiments>
</comment>
<comment type="interaction">
    <interactant intactId="EBI-10276168">
        <id>Q8WTX7</id>
    </interactant>
    <interactant intactId="EBI-2515073">
        <id>Q6PJI9</id>
        <label>WDR59</label>
    </interactant>
    <organismsDiffer>false</organismsDiffer>
    <experiments>8</experiments>
</comment>
<comment type="interaction">
    <interactant intactId="EBI-10276168">
        <id>Q8WTX7</id>
    </interactant>
    <interactant intactId="EBI-5458880">
        <id>Q96GY0</id>
        <label>ZC2HC1A</label>
    </interactant>
    <organismsDiffer>false</organismsDiffer>
    <experiments>14</experiments>
</comment>
<comment type="interaction">
    <interactant intactId="EBI-10276168">
        <id>Q8WTX7</id>
    </interactant>
    <interactant intactId="EBI-12275374">
        <id>Q5TFG8</id>
        <label>ZC2HC1B</label>
    </interactant>
    <organismsDiffer>false</organismsDiffer>
    <experiments>3</experiments>
</comment>
<comment type="subcellular location">
    <subcellularLocation>
        <location evidence="1">Cytoplasm</location>
        <location evidence="1">Cytosol</location>
    </subcellularLocation>
</comment>
<comment type="tissue specificity">
    <text evidence="5">Widely expressed.</text>
</comment>
<comment type="domain">
    <text evidence="6">Based on x-ray crystallography data, the protein would be constituted of 4 tandem ACT domains instead of the 2 predicted from the sequence.</text>
</comment>
<comment type="PTM">
    <text evidence="4">Phosphorylation at Ser-14 by AKT1, promoting the interaction between CASTOR1 and RNF167.</text>
</comment>
<comment type="PTM">
    <text evidence="4">Ubiquitinated by RNF167 via 'Lys-29'-polyubiquitination, leading to its degradation, releasing the GATOR2 complex (PubMed:33594058). Ubiquitination by RNF167 is promoted by phosphorylation at Ser-14 by AKT1 (PubMed:33594058).</text>
</comment>
<comment type="similarity">
    <text evidence="7">Belongs to the GATS family.</text>
</comment>
<comment type="sequence caution" evidence="7">
    <conflict type="erroneous gene model prediction">
        <sequence resource="EMBL-CDS" id="AAC23432"/>
    </conflict>
</comment>
<comment type="sequence caution" evidence="7">
    <conflict type="erroneous gene model prediction">
        <sequence resource="EMBL-CDS" id="AAC23433"/>
    </conflict>
</comment>
<comment type="sequence caution" evidence="7">
    <conflict type="erroneous termination">
        <sequence resource="EMBL-CDS" id="BAB70963"/>
    </conflict>
    <text>Truncated C-terminus.</text>
</comment>
<comment type="sequence caution" evidence="7">
    <conflict type="erroneous gene model prediction">
        <sequence resource="EMBL-CDS" id="EAW59868"/>
    </conflict>
</comment>
<reference key="1">
    <citation type="journal article" date="2004" name="Genome Biol.">
        <title>A genome annotation-driven approach to cloning the human ORFeome.</title>
        <authorList>
            <person name="Collins J.E."/>
            <person name="Wright C.L."/>
            <person name="Edwards C.A."/>
            <person name="Davis M.P."/>
            <person name="Grinham J.A."/>
            <person name="Cole C.G."/>
            <person name="Goward M.E."/>
            <person name="Aguado B."/>
            <person name="Mallya M."/>
            <person name="Mokrab Y."/>
            <person name="Huckle E.J."/>
            <person name="Beare D.M."/>
            <person name="Dunham I."/>
        </authorList>
    </citation>
    <scope>NUCLEOTIDE SEQUENCE [LARGE SCALE MRNA]</scope>
</reference>
<reference key="2">
    <citation type="journal article" date="2004" name="Nat. Genet.">
        <title>Complete sequencing and characterization of 21,243 full-length human cDNAs.</title>
        <authorList>
            <person name="Ota T."/>
            <person name="Suzuki Y."/>
            <person name="Nishikawa T."/>
            <person name="Otsuki T."/>
            <person name="Sugiyama T."/>
            <person name="Irie R."/>
            <person name="Wakamatsu A."/>
            <person name="Hayashi K."/>
            <person name="Sato H."/>
            <person name="Nagai K."/>
            <person name="Kimura K."/>
            <person name="Makita H."/>
            <person name="Sekine M."/>
            <person name="Obayashi M."/>
            <person name="Nishi T."/>
            <person name="Shibahara T."/>
            <person name="Tanaka T."/>
            <person name="Ishii S."/>
            <person name="Yamamoto J."/>
            <person name="Saito K."/>
            <person name="Kawai Y."/>
            <person name="Isono Y."/>
            <person name="Nakamura Y."/>
            <person name="Nagahari K."/>
            <person name="Murakami K."/>
            <person name="Yasuda T."/>
            <person name="Iwayanagi T."/>
            <person name="Wagatsuma M."/>
            <person name="Shiratori A."/>
            <person name="Sudo H."/>
            <person name="Hosoiri T."/>
            <person name="Kaku Y."/>
            <person name="Kodaira H."/>
            <person name="Kondo H."/>
            <person name="Sugawara M."/>
            <person name="Takahashi M."/>
            <person name="Kanda K."/>
            <person name="Yokoi T."/>
            <person name="Furuya T."/>
            <person name="Kikkawa E."/>
            <person name="Omura Y."/>
            <person name="Abe K."/>
            <person name="Kamihara K."/>
            <person name="Katsuta N."/>
            <person name="Sato K."/>
            <person name="Tanikawa M."/>
            <person name="Yamazaki M."/>
            <person name="Ninomiya K."/>
            <person name="Ishibashi T."/>
            <person name="Yamashita H."/>
            <person name="Murakawa K."/>
            <person name="Fujimori K."/>
            <person name="Tanai H."/>
            <person name="Kimata M."/>
            <person name="Watanabe M."/>
            <person name="Hiraoka S."/>
            <person name="Chiba Y."/>
            <person name="Ishida S."/>
            <person name="Ono Y."/>
            <person name="Takiguchi S."/>
            <person name="Watanabe S."/>
            <person name="Yosida M."/>
            <person name="Hotuta T."/>
            <person name="Kusano J."/>
            <person name="Kanehori K."/>
            <person name="Takahashi-Fujii A."/>
            <person name="Hara H."/>
            <person name="Tanase T.-O."/>
            <person name="Nomura Y."/>
            <person name="Togiya S."/>
            <person name="Komai F."/>
            <person name="Hara R."/>
            <person name="Takeuchi K."/>
            <person name="Arita M."/>
            <person name="Imose N."/>
            <person name="Musashino K."/>
            <person name="Yuuki H."/>
            <person name="Oshima A."/>
            <person name="Sasaki N."/>
            <person name="Aotsuka S."/>
            <person name="Yoshikawa Y."/>
            <person name="Matsunawa H."/>
            <person name="Ichihara T."/>
            <person name="Shiohata N."/>
            <person name="Sano S."/>
            <person name="Moriya S."/>
            <person name="Momiyama H."/>
            <person name="Satoh N."/>
            <person name="Takami S."/>
            <person name="Terashima Y."/>
            <person name="Suzuki O."/>
            <person name="Nakagawa S."/>
            <person name="Senoh A."/>
            <person name="Mizoguchi H."/>
            <person name="Goto Y."/>
            <person name="Shimizu F."/>
            <person name="Wakebe H."/>
            <person name="Hishigaki H."/>
            <person name="Watanabe T."/>
            <person name="Sugiyama A."/>
            <person name="Takemoto M."/>
            <person name="Kawakami B."/>
            <person name="Yamazaki M."/>
            <person name="Watanabe K."/>
            <person name="Kumagai A."/>
            <person name="Itakura S."/>
            <person name="Fukuzumi Y."/>
            <person name="Fujimori Y."/>
            <person name="Komiyama M."/>
            <person name="Tashiro H."/>
            <person name="Tanigami A."/>
            <person name="Fujiwara T."/>
            <person name="Ono T."/>
            <person name="Yamada K."/>
            <person name="Fujii Y."/>
            <person name="Ozaki K."/>
            <person name="Hirao M."/>
            <person name="Ohmori Y."/>
            <person name="Kawabata A."/>
            <person name="Hikiji T."/>
            <person name="Kobatake N."/>
            <person name="Inagaki H."/>
            <person name="Ikema Y."/>
            <person name="Okamoto S."/>
            <person name="Okitani R."/>
            <person name="Kawakami T."/>
            <person name="Noguchi S."/>
            <person name="Itoh T."/>
            <person name="Shigeta K."/>
            <person name="Senba T."/>
            <person name="Matsumura K."/>
            <person name="Nakajima Y."/>
            <person name="Mizuno T."/>
            <person name="Morinaga M."/>
            <person name="Sasaki M."/>
            <person name="Togashi T."/>
            <person name="Oyama M."/>
            <person name="Hata H."/>
            <person name="Watanabe M."/>
            <person name="Komatsu T."/>
            <person name="Mizushima-Sugano J."/>
            <person name="Satoh T."/>
            <person name="Shirai Y."/>
            <person name="Takahashi Y."/>
            <person name="Nakagawa K."/>
            <person name="Okumura K."/>
            <person name="Nagase T."/>
            <person name="Nomura N."/>
            <person name="Kikuchi H."/>
            <person name="Masuho Y."/>
            <person name="Yamashita R."/>
            <person name="Nakai K."/>
            <person name="Yada T."/>
            <person name="Nakamura Y."/>
            <person name="Ohara O."/>
            <person name="Isogai T."/>
            <person name="Sugano S."/>
        </authorList>
    </citation>
    <scope>NUCLEOTIDE SEQUENCE [LARGE SCALE MRNA]</scope>
    <source>
        <tissue>Lung</tissue>
    </source>
</reference>
<reference key="3">
    <citation type="journal article" date="1999" name="Nature">
        <title>The DNA sequence of human chromosome 22.</title>
        <authorList>
            <person name="Dunham I."/>
            <person name="Hunt A.R."/>
            <person name="Collins J.E."/>
            <person name="Bruskiewich R."/>
            <person name="Beare D.M."/>
            <person name="Clamp M."/>
            <person name="Smink L.J."/>
            <person name="Ainscough R."/>
            <person name="Almeida J.P."/>
            <person name="Babbage A.K."/>
            <person name="Bagguley C."/>
            <person name="Bailey J."/>
            <person name="Barlow K.F."/>
            <person name="Bates K.N."/>
            <person name="Beasley O.P."/>
            <person name="Bird C.P."/>
            <person name="Blakey S.E."/>
            <person name="Bridgeman A.M."/>
            <person name="Buck D."/>
            <person name="Burgess J."/>
            <person name="Burrill W.D."/>
            <person name="Burton J."/>
            <person name="Carder C."/>
            <person name="Carter N.P."/>
            <person name="Chen Y."/>
            <person name="Clark G."/>
            <person name="Clegg S.M."/>
            <person name="Cobley V.E."/>
            <person name="Cole C.G."/>
            <person name="Collier R.E."/>
            <person name="Connor R."/>
            <person name="Conroy D."/>
            <person name="Corby N.R."/>
            <person name="Coville G.J."/>
            <person name="Cox A.V."/>
            <person name="Davis J."/>
            <person name="Dawson E."/>
            <person name="Dhami P.D."/>
            <person name="Dockree C."/>
            <person name="Dodsworth S.J."/>
            <person name="Durbin R.M."/>
            <person name="Ellington A.G."/>
            <person name="Evans K.L."/>
            <person name="Fey J.M."/>
            <person name="Fleming K."/>
            <person name="French L."/>
            <person name="Garner A.A."/>
            <person name="Gilbert J.G.R."/>
            <person name="Goward M.E."/>
            <person name="Grafham D.V."/>
            <person name="Griffiths M.N.D."/>
            <person name="Hall C."/>
            <person name="Hall R.E."/>
            <person name="Hall-Tamlyn G."/>
            <person name="Heathcott R.W."/>
            <person name="Ho S."/>
            <person name="Holmes S."/>
            <person name="Hunt S.E."/>
            <person name="Jones M.C."/>
            <person name="Kershaw J."/>
            <person name="Kimberley A.M."/>
            <person name="King A."/>
            <person name="Laird G.K."/>
            <person name="Langford C.F."/>
            <person name="Leversha M.A."/>
            <person name="Lloyd C."/>
            <person name="Lloyd D.M."/>
            <person name="Martyn I.D."/>
            <person name="Mashreghi-Mohammadi M."/>
            <person name="Matthews L.H."/>
            <person name="Mccann O.T."/>
            <person name="Mcclay J."/>
            <person name="Mclaren S."/>
            <person name="McMurray A.A."/>
            <person name="Milne S.A."/>
            <person name="Mortimore B.J."/>
            <person name="Odell C.N."/>
            <person name="Pavitt R."/>
            <person name="Pearce A.V."/>
            <person name="Pearson D."/>
            <person name="Phillimore B.J.C.T."/>
            <person name="Phillips S.H."/>
            <person name="Plumb R.W."/>
            <person name="Ramsay H."/>
            <person name="Ramsey Y."/>
            <person name="Rogers L."/>
            <person name="Ross M.T."/>
            <person name="Scott C.E."/>
            <person name="Sehra H.K."/>
            <person name="Skuce C.D."/>
            <person name="Smalley S."/>
            <person name="Smith M.L."/>
            <person name="Soderlund C."/>
            <person name="Spragon L."/>
            <person name="Steward C.A."/>
            <person name="Sulston J.E."/>
            <person name="Swann R.M."/>
            <person name="Vaudin M."/>
            <person name="Wall M."/>
            <person name="Wallis J.M."/>
            <person name="Whiteley M.N."/>
            <person name="Willey D.L."/>
            <person name="Williams L."/>
            <person name="Williams S.A."/>
            <person name="Williamson H."/>
            <person name="Wilmer T.E."/>
            <person name="Wilming L."/>
            <person name="Wright C.L."/>
            <person name="Hubbard T."/>
            <person name="Bentley D.R."/>
            <person name="Beck S."/>
            <person name="Rogers J."/>
            <person name="Shimizu N."/>
            <person name="Minoshima S."/>
            <person name="Kawasaki K."/>
            <person name="Sasaki T."/>
            <person name="Asakawa S."/>
            <person name="Kudoh J."/>
            <person name="Shintani A."/>
            <person name="Shibuya K."/>
            <person name="Yoshizaki Y."/>
            <person name="Aoki N."/>
            <person name="Mitsuyama S."/>
            <person name="Roe B.A."/>
            <person name="Chen F."/>
            <person name="Chu L."/>
            <person name="Crabtree J."/>
            <person name="Deschamps S."/>
            <person name="Do A."/>
            <person name="Do T."/>
            <person name="Dorman A."/>
            <person name="Fang F."/>
            <person name="Fu Y."/>
            <person name="Hu P."/>
            <person name="Hua A."/>
            <person name="Kenton S."/>
            <person name="Lai H."/>
            <person name="Lao H.I."/>
            <person name="Lewis J."/>
            <person name="Lewis S."/>
            <person name="Lin S.-P."/>
            <person name="Loh P."/>
            <person name="Malaj E."/>
            <person name="Nguyen T."/>
            <person name="Pan H."/>
            <person name="Phan S."/>
            <person name="Qi S."/>
            <person name="Qian Y."/>
            <person name="Ray L."/>
            <person name="Ren Q."/>
            <person name="Shaull S."/>
            <person name="Sloan D."/>
            <person name="Song L."/>
            <person name="Wang Q."/>
            <person name="Wang Y."/>
            <person name="Wang Z."/>
            <person name="White J."/>
            <person name="Willingham D."/>
            <person name="Wu H."/>
            <person name="Yao Z."/>
            <person name="Zhan M."/>
            <person name="Zhang G."/>
            <person name="Chissoe S."/>
            <person name="Murray J."/>
            <person name="Miller N."/>
            <person name="Minx P."/>
            <person name="Fulton R."/>
            <person name="Johnson D."/>
            <person name="Bemis G."/>
            <person name="Bentley D."/>
            <person name="Bradshaw H."/>
            <person name="Bourne S."/>
            <person name="Cordes M."/>
            <person name="Du Z."/>
            <person name="Fulton L."/>
            <person name="Goela D."/>
            <person name="Graves T."/>
            <person name="Hawkins J."/>
            <person name="Hinds K."/>
            <person name="Kemp K."/>
            <person name="Latreille P."/>
            <person name="Layman D."/>
            <person name="Ozersky P."/>
            <person name="Rohlfing T."/>
            <person name="Scheet P."/>
            <person name="Walker C."/>
            <person name="Wamsley A."/>
            <person name="Wohldmann P."/>
            <person name="Pepin K."/>
            <person name="Nelson J."/>
            <person name="Korf I."/>
            <person name="Bedell J.A."/>
            <person name="Hillier L.W."/>
            <person name="Mardis E."/>
            <person name="Waterston R."/>
            <person name="Wilson R."/>
            <person name="Emanuel B.S."/>
            <person name="Shaikh T."/>
            <person name="Kurahashi H."/>
            <person name="Saitta S."/>
            <person name="Budarf M.L."/>
            <person name="McDermid H.E."/>
            <person name="Johnson A."/>
            <person name="Wong A.C.C."/>
            <person name="Morrow B.E."/>
            <person name="Edelmann L."/>
            <person name="Kim U.J."/>
            <person name="Shizuya H."/>
            <person name="Simon M.I."/>
            <person name="Dumanski J.P."/>
            <person name="Peyrard M."/>
            <person name="Kedra D."/>
            <person name="Seroussi E."/>
            <person name="Fransson I."/>
            <person name="Tapia I."/>
            <person name="Bruder C.E."/>
            <person name="O'Brien K.P."/>
            <person name="Wilkinson P."/>
            <person name="Bodenteich A."/>
            <person name="Hartman K."/>
            <person name="Hu X."/>
            <person name="Khan A.S."/>
            <person name="Lane L."/>
            <person name="Tilahun Y."/>
            <person name="Wright H."/>
        </authorList>
    </citation>
    <scope>NUCLEOTIDE SEQUENCE [LARGE SCALE GENOMIC DNA]</scope>
</reference>
<reference key="4">
    <citation type="submission" date="2005-07" db="EMBL/GenBank/DDBJ databases">
        <authorList>
            <person name="Mural R.J."/>
            <person name="Istrail S."/>
            <person name="Sutton G.G."/>
            <person name="Florea L."/>
            <person name="Halpern A.L."/>
            <person name="Mobarry C.M."/>
            <person name="Lippert R."/>
            <person name="Walenz B."/>
            <person name="Shatkay H."/>
            <person name="Dew I."/>
            <person name="Miller J.R."/>
            <person name="Flanigan M.J."/>
            <person name="Edwards N.J."/>
            <person name="Bolanos R."/>
            <person name="Fasulo D."/>
            <person name="Halldorsson B.V."/>
            <person name="Hannenhalli S."/>
            <person name="Turner R."/>
            <person name="Yooseph S."/>
            <person name="Lu F."/>
            <person name="Nusskern D.R."/>
            <person name="Shue B.C."/>
            <person name="Zheng X.H."/>
            <person name="Zhong F."/>
            <person name="Delcher A.L."/>
            <person name="Huson D.H."/>
            <person name="Kravitz S.A."/>
            <person name="Mouchard L."/>
            <person name="Reinert K."/>
            <person name="Remington K.A."/>
            <person name="Clark A.G."/>
            <person name="Waterman M.S."/>
            <person name="Eichler E.E."/>
            <person name="Adams M.D."/>
            <person name="Hunkapiller M.W."/>
            <person name="Myers E.W."/>
            <person name="Venter J.C."/>
        </authorList>
    </citation>
    <scope>NUCLEOTIDE SEQUENCE [LARGE SCALE GENOMIC DNA]</scope>
</reference>
<reference key="5">
    <citation type="journal article" date="2004" name="Genome Res.">
        <title>The status, quality, and expansion of the NIH full-length cDNA project: the Mammalian Gene Collection (MGC).</title>
        <authorList>
            <consortium name="The MGC Project Team"/>
        </authorList>
    </citation>
    <scope>NUCLEOTIDE SEQUENCE [LARGE SCALE MRNA]</scope>
    <source>
        <tissue>Uterus</tissue>
    </source>
</reference>
<reference key="6">
    <citation type="journal article" date="2016" name="Cell">
        <title>The CASTOR proteins are arginine sensors for the mTORC1 pathway.</title>
        <authorList>
            <person name="Chantranupong L."/>
            <person name="Scaria S.M."/>
            <person name="Saxton R.A."/>
            <person name="Gygi M.P."/>
            <person name="Shen K."/>
            <person name="Wyant G.A."/>
            <person name="Wang T."/>
            <person name="Harper J.W."/>
            <person name="Gygi S.P."/>
            <person name="Sabatini D.M."/>
        </authorList>
    </citation>
    <scope>FUNCTION</scope>
    <scope>INTERACTION WITH GATOR2 COMPLEX</scope>
    <scope>SUBUNIT</scope>
    <scope>SUBCELLULAR LOCATION</scope>
    <scope>TISSUE SPECIFICITY</scope>
    <scope>MUTAGENESIS OF ILE-280</scope>
</reference>
<reference key="7">
    <citation type="journal article" date="2019" name="Cell Metab.">
        <title>Transmembrane 4 L six family member 5 senses arginine for mTORC1 signaling.</title>
        <authorList>
            <person name="Jung J.W."/>
            <person name="Macalino S.J.Y."/>
            <person name="Cui M."/>
            <person name="Kim J.E."/>
            <person name="Kim H.J."/>
            <person name="Song D.G."/>
            <person name="Nam S.H."/>
            <person name="Kim S."/>
            <person name="Choi S."/>
            <person name="Lee J.W."/>
        </authorList>
    </citation>
    <scope>INTERACTION WITH TM4SF5</scope>
</reference>
<reference key="8">
    <citation type="journal article" date="2021" name="Nat. Commun.">
        <title>RNF167 activates mTORC1 and promotes tumorigenesis by targeting CASTOR1 for ubiquitination and degradation.</title>
        <authorList>
            <person name="Li T."/>
            <person name="Wang X."/>
            <person name="Ju E."/>
            <person name="da Silva S.R."/>
            <person name="Chen L."/>
            <person name="Zhang X."/>
            <person name="Wei S."/>
            <person name="Gao S.J."/>
        </authorList>
    </citation>
    <scope>FUNCTION</scope>
    <scope>UBIQUITINATION</scope>
    <scope>PHOSPHORYLATION AT SER-14</scope>
    <scope>MUTAGENESIS OF SER-14; LYS-61; LYS-96 AND LYS-213</scope>
</reference>
<reference key="9">
    <citation type="journal article" date="2016" name="Nature">
        <title>Mechanism of arginine sensing by CASTOR1 upstream of mTORC1.</title>
        <authorList>
            <person name="Saxton R.A."/>
            <person name="Chantranupong L."/>
            <person name="Knockenhauer K.E."/>
            <person name="Schwartz T.U."/>
            <person name="Sabatini D.M."/>
        </authorList>
    </citation>
    <scope>X-RAY CRYSTALLOGRAPHY (1.80 ANGSTROMS) IN COMPLEX WITH ARGININE</scope>
    <scope>FUNCTION</scope>
    <scope>SUBUNIT</scope>
    <scope>MUTAGENESIS OF GLN-90; LYS-96; ARG-99; 108-HIS--VAL-110; SER-111; LEU-113; 118-TYR-GLN-119; ASP-121; ARG-126; HIS-175; ILE-202; TYR-207; GLU-261; ARG-264; ASP-276; GLU-277; CYS-278; ASP-292; ASN-302 AND ASP-304</scope>
    <scope>DOMAIN</scope>
</reference>
<keyword id="KW-0002">3D-structure</keyword>
<keyword id="KW-0963">Cytoplasm</keyword>
<keyword id="KW-0597">Phosphoprotein</keyword>
<keyword id="KW-1267">Proteomics identification</keyword>
<keyword id="KW-1185">Reference proteome</keyword>
<keyword id="KW-0832">Ubl conjugation</keyword>
<accession>Q8WTX7</accession>
<accession>O76052</accession>
<accession>Q96ND9</accession>
<accession>Q9UIE8</accession>
<feature type="chain" id="PRO_0000348590" description="Cytosolic arginine sensor for mTORC1 subunit 1">
    <location>
        <begin position="1"/>
        <end position="329"/>
    </location>
</feature>
<feature type="domain" description="ACT 1">
    <location>
        <begin position="72"/>
        <end position="138"/>
    </location>
</feature>
<feature type="domain" description="ACT 2">
    <location>
        <begin position="260"/>
        <end position="321"/>
    </location>
</feature>
<feature type="binding site" evidence="2 10">
    <location>
        <begin position="111"/>
        <end position="112"/>
    </location>
    <ligand>
        <name>L-arginine</name>
        <dbReference type="ChEBI" id="CHEBI:32682"/>
    </ligand>
</feature>
<feature type="binding site" evidence="2 10">
    <location>
        <position position="274"/>
    </location>
    <ligand>
        <name>L-arginine</name>
        <dbReference type="ChEBI" id="CHEBI:32682"/>
    </ligand>
</feature>
<feature type="binding site" evidence="2 10">
    <location>
        <begin position="280"/>
        <end position="281"/>
    </location>
    <ligand>
        <name>L-arginine</name>
        <dbReference type="ChEBI" id="CHEBI:32682"/>
    </ligand>
</feature>
<feature type="binding site" evidence="2 10">
    <location>
        <begin position="300"/>
        <end position="304"/>
    </location>
    <ligand>
        <name>L-arginine</name>
        <dbReference type="ChEBI" id="CHEBI:32682"/>
    </ligand>
</feature>
<feature type="modified residue" description="Phosphoserine; by PKB/AKT1" evidence="4">
    <location>
        <position position="14"/>
    </location>
</feature>
<feature type="mutagenesis site" description="Abolished phosphorylation by AKT1, leading to decreased interaction with RNF167 and subsequent ubiquitination." evidence="4">
    <original>S</original>
    <variation>A</variation>
    <location>
        <position position="14"/>
    </location>
</feature>
<feature type="mutagenesis site" description="Mimics phosphorylation, leading to promote interaction with RNF167 and subsequent ubiquitination." evidence="4">
    <original>S</original>
    <variation>D</variation>
    <location>
        <position position="14"/>
    </location>
</feature>
<feature type="mutagenesis site" description="In 3KR mutant; abolished ubiquitination by RNF167; when associated with R-96 and R-213." evidence="4">
    <original>K</original>
    <variation>R</variation>
    <location>
        <position position="61"/>
    </location>
</feature>
<feature type="mutagenesis site" description="No effect on interaction with the GATOR2 complex." evidence="2">
    <original>Q</original>
    <variation>A</variation>
    <location>
        <position position="90"/>
    </location>
</feature>
<feature type="mutagenesis site" description="No effect on interaction with the GATOR2 complex." evidence="2">
    <original>K</original>
    <variation>A</variation>
    <location>
        <position position="96"/>
    </location>
</feature>
<feature type="mutagenesis site" description="In 3KR mutant; abolished ubiquitination by RNF167; when associated with R-61 and R-213." evidence="4">
    <original>K</original>
    <variation>R</variation>
    <location>
        <position position="96"/>
    </location>
</feature>
<feature type="mutagenesis site" description="No effect on interaction with the GATOR2 complex." evidence="2">
    <original>R</original>
    <variation>A</variation>
    <location>
        <position position="99"/>
    </location>
</feature>
<feature type="mutagenesis site" description="Loss of arginine-binding. Constitutively interacts with the GATOR2 complex." evidence="2">
    <original>HHV</original>
    <variation>QNI</variation>
    <location>
        <begin position="108"/>
        <end position="110"/>
    </location>
</feature>
<feature type="mutagenesis site" description="Loss of arginine-binding. Constitutively interacts with the GATOR2 complex. Constitutively inhibits the TORC1 signaling pathway." evidence="2">
    <original>S</original>
    <variation>A</variation>
    <location>
        <position position="111"/>
    </location>
</feature>
<feature type="mutagenesis site" description="No effect on interaction with the GATOR2 complex." evidence="2">
    <original>L</original>
    <variation>F</variation>
    <location>
        <position position="113"/>
    </location>
</feature>
<feature type="mutagenesis site" description="No effect on arginine-binding. No effect on homodimerization. Loss of interaction with the GATOR2 complex which constitutively activates the TORC1 signaling pathway." evidence="2">
    <original>YQ</original>
    <variation>AA</variation>
    <location>
        <begin position="118"/>
        <end position="119"/>
    </location>
</feature>
<feature type="mutagenesis site" description="No effect on arginine-binding. No effect on homodimerization. Loss of interaction with the GATOR2 complex which constitutively activates the TORC1 signaling pathway." evidence="2">
    <original>D</original>
    <variation>A</variation>
    <location>
        <position position="121"/>
    </location>
</feature>
<feature type="mutagenesis site" description="Decreased arginine-binding. Constitutively interacts with the GATOR2 complex." evidence="2">
    <original>R</original>
    <variation>A</variation>
    <location>
        <position position="126"/>
    </location>
</feature>
<feature type="mutagenesis site" description="Decreased arginine-binding. Constitutively interacts with the GATOR2 complex." evidence="2">
    <original>H</original>
    <variation>A</variation>
    <location>
        <position position="175"/>
    </location>
</feature>
<feature type="mutagenesis site" description="No effect on arginine-binding. Loss of homodimerization. Decreased interaction with the GATOR2 complex which constitutively activates the TORC1 signaling pathway." evidence="2">
    <original>I</original>
    <variation>E</variation>
    <location>
        <position position="202"/>
    </location>
</feature>
<feature type="mutagenesis site" description="No effect on arginine-binding. Loss of homodimerization. Decreased interaction with the GATOR2 complex which constitutively activates the TORC1 signaling pathway." evidence="2">
    <original>Y</original>
    <variation>S</variation>
    <location>
        <position position="207"/>
    </location>
</feature>
<feature type="mutagenesis site" description="In 3KR mutant; abolished ubiquitination by RNF167; when associated with R-61 and R-96." evidence="4">
    <original>K</original>
    <variation>R</variation>
    <location>
        <position position="213"/>
    </location>
</feature>
<feature type="mutagenesis site" description="No effect on arginine-binding. No effect on homodimerization. Loss of interaction with the GATOR2 complex." evidence="2">
    <original>E</original>
    <variation>A</variation>
    <location>
        <position position="261"/>
    </location>
</feature>
<feature type="mutagenesis site" description="No effect on interaction with the GATOR2 complex." evidence="2">
    <original>R</original>
    <variation>A</variation>
    <location>
        <position position="264"/>
    </location>
</feature>
<feature type="mutagenesis site" description="Decreased arginine-binding. Constitutively interacts with the GATOR2 complex." evidence="2">
    <original>D</original>
    <variation>A</variation>
    <location>
        <position position="276"/>
    </location>
</feature>
<feature type="mutagenesis site" description="Decreased arginine-binding. Constitutively interacts with the GATOR2 complex." evidence="2">
    <original>E</original>
    <variation>A</variation>
    <location>
        <position position="277"/>
    </location>
</feature>
<feature type="mutagenesis site" description="Decreased arginine-binding. Constitutively interacts with the GATOR2 complex." evidence="2">
    <original>C</original>
    <variation>A</variation>
    <location>
        <position position="278"/>
    </location>
</feature>
<feature type="mutagenesis site" description="Loss of arginine-binding. Constitutively inhibits the TORC1 signaling pathway." evidence="1">
    <original>I</original>
    <variation>A</variation>
    <location>
        <position position="280"/>
    </location>
</feature>
<feature type="mutagenesis site" description="No effect on arginine-binding. No effect on homodimerization. Loss of interaction with the GATOR2 complex." evidence="2">
    <original>D</original>
    <variation>A</variation>
    <location>
        <position position="292"/>
    </location>
</feature>
<feature type="mutagenesis site" description="No effect on interaction with the GATOR2 complex." evidence="2">
    <original>N</original>
    <variation>K</variation>
    <location>
        <position position="302"/>
    </location>
</feature>
<feature type="mutagenesis site" description="Loss of arginine-binding. Constitutively interacts with the GATOR2 complex. Constitutively inhibits the TORC1 signaling pathway." evidence="2">
    <original>D</original>
    <variation>A</variation>
    <location>
        <position position="304"/>
    </location>
</feature>
<feature type="sequence conflict" description="In Ref. 2; BAB70963." evidence="7" ref="2">
    <original>H</original>
    <variation>R</variation>
    <location>
        <position position="4"/>
    </location>
</feature>
<feature type="strand" evidence="13">
    <location>
        <begin position="2"/>
        <end position="16"/>
    </location>
</feature>
<feature type="helix" evidence="13">
    <location>
        <begin position="17"/>
        <end position="19"/>
    </location>
</feature>
<feature type="helix" evidence="13">
    <location>
        <begin position="20"/>
        <end position="32"/>
    </location>
</feature>
<feature type="helix" evidence="13">
    <location>
        <begin position="34"/>
        <end position="36"/>
    </location>
</feature>
<feature type="strand" evidence="13">
    <location>
        <begin position="41"/>
        <end position="46"/>
    </location>
</feature>
<feature type="strand" evidence="13">
    <location>
        <begin position="48"/>
        <end position="56"/>
    </location>
</feature>
<feature type="helix" evidence="13">
    <location>
        <begin position="57"/>
        <end position="60"/>
    </location>
</feature>
<feature type="strand" evidence="13">
    <location>
        <begin position="69"/>
        <end position="71"/>
    </location>
</feature>
<feature type="strand" evidence="13">
    <location>
        <begin position="76"/>
        <end position="81"/>
    </location>
</feature>
<feature type="helix" evidence="11">
    <location>
        <begin position="84"/>
        <end position="86"/>
    </location>
</feature>
<feature type="strand" evidence="11">
    <location>
        <begin position="91"/>
        <end position="93"/>
    </location>
</feature>
<feature type="helix" evidence="13">
    <location>
        <begin position="94"/>
        <end position="97"/>
    </location>
</feature>
<feature type="turn" evidence="13">
    <location>
        <begin position="98"/>
        <end position="101"/>
    </location>
</feature>
<feature type="helix" evidence="13">
    <location>
        <begin position="102"/>
        <end position="107"/>
    </location>
</feature>
<feature type="strand" evidence="13">
    <location>
        <begin position="112"/>
        <end position="116"/>
    </location>
</feature>
<feature type="strand" evidence="13">
    <location>
        <begin position="121"/>
        <end position="126"/>
    </location>
</feature>
<feature type="helix" evidence="13">
    <location>
        <begin position="127"/>
        <end position="129"/>
    </location>
</feature>
<feature type="helix" evidence="13">
    <location>
        <begin position="130"/>
        <end position="137"/>
    </location>
</feature>
<feature type="turn" evidence="13">
    <location>
        <begin position="138"/>
        <end position="140"/>
    </location>
</feature>
<feature type="strand" evidence="13">
    <location>
        <begin position="141"/>
        <end position="147"/>
    </location>
</feature>
<feature type="strand" evidence="13">
    <location>
        <begin position="150"/>
        <end position="153"/>
    </location>
</feature>
<feature type="strand" evidence="13">
    <location>
        <begin position="184"/>
        <end position="188"/>
    </location>
</feature>
<feature type="helix" evidence="13">
    <location>
        <begin position="191"/>
        <end position="193"/>
    </location>
</feature>
<feature type="helix" evidence="13">
    <location>
        <begin position="195"/>
        <end position="197"/>
    </location>
</feature>
<feature type="helix" evidence="13">
    <location>
        <begin position="198"/>
        <end position="206"/>
    </location>
</feature>
<feature type="turn" evidence="13">
    <location>
        <begin position="216"/>
        <end position="218"/>
    </location>
</feature>
<feature type="strand" evidence="13">
    <location>
        <begin position="228"/>
        <end position="233"/>
    </location>
</feature>
<feature type="strand" evidence="13">
    <location>
        <begin position="236"/>
        <end position="242"/>
    </location>
</feature>
<feature type="helix" evidence="13">
    <location>
        <begin position="243"/>
        <end position="248"/>
    </location>
</feature>
<feature type="turn" evidence="13">
    <location>
        <begin position="251"/>
        <end position="253"/>
    </location>
</feature>
<feature type="strand" evidence="12">
    <location>
        <begin position="254"/>
        <end position="258"/>
    </location>
</feature>
<feature type="strand" evidence="13">
    <location>
        <begin position="263"/>
        <end position="268"/>
    </location>
</feature>
<feature type="turn" evidence="13">
    <location>
        <begin position="274"/>
        <end position="276"/>
    </location>
</feature>
<feature type="helix" evidence="13">
    <location>
        <begin position="280"/>
        <end position="290"/>
    </location>
</feature>
<feature type="strand" evidence="13">
    <location>
        <begin position="295"/>
        <end position="299"/>
    </location>
</feature>
<feature type="strand" evidence="13">
    <location>
        <begin position="304"/>
        <end position="309"/>
    </location>
</feature>
<feature type="helix" evidence="13">
    <location>
        <begin position="310"/>
        <end position="312"/>
    </location>
</feature>
<feature type="helix" evidence="13">
    <location>
        <begin position="313"/>
        <end position="320"/>
    </location>
</feature>
<dbReference type="EMBL" id="CR456449">
    <property type="protein sequence ID" value="CAG30335.1"/>
    <property type="molecule type" value="mRNA"/>
</dbReference>
<dbReference type="EMBL" id="AK055587">
    <property type="protein sequence ID" value="BAB70963.1"/>
    <property type="status" value="ALT_SEQ"/>
    <property type="molecule type" value="mRNA"/>
</dbReference>
<dbReference type="EMBL" id="AC004997">
    <property type="protein sequence ID" value="AAC23432.1"/>
    <property type="status" value="ALT_SEQ"/>
    <property type="molecule type" value="Genomic_DNA"/>
</dbReference>
<dbReference type="EMBL" id="AC004997">
    <property type="protein sequence ID" value="AAC23433.1"/>
    <property type="status" value="ALT_SEQ"/>
    <property type="molecule type" value="Genomic_DNA"/>
</dbReference>
<dbReference type="EMBL" id="CH471095">
    <property type="protein sequence ID" value="EAW59868.1"/>
    <property type="status" value="ALT_SEQ"/>
    <property type="molecule type" value="Genomic_DNA"/>
</dbReference>
<dbReference type="EMBL" id="CH471095">
    <property type="protein sequence ID" value="EAW59870.1"/>
    <property type="molecule type" value="Genomic_DNA"/>
</dbReference>
<dbReference type="EMBL" id="BC021927">
    <property type="protein sequence ID" value="AAH21927.1"/>
    <property type="molecule type" value="mRNA"/>
</dbReference>
<dbReference type="CCDS" id="CCDS43001.1"/>
<dbReference type="RefSeq" id="NP_001032755.1">
    <property type="nucleotide sequence ID" value="NM_001037666.3"/>
</dbReference>
<dbReference type="PDB" id="5GS9">
    <property type="method" value="X-ray"/>
    <property type="resolution" value="2.50 A"/>
    <property type="chains" value="A/B/C/D=1-329"/>
</dbReference>
<dbReference type="PDB" id="5GT7">
    <property type="method" value="X-ray"/>
    <property type="resolution" value="2.05 A"/>
    <property type="chains" value="A/B/C/D=1-323"/>
</dbReference>
<dbReference type="PDB" id="5GT8">
    <property type="method" value="X-ray"/>
    <property type="resolution" value="2.80 A"/>
    <property type="chains" value="A/B/C/D=1-329"/>
</dbReference>
<dbReference type="PDB" id="5GV2">
    <property type="method" value="X-ray"/>
    <property type="resolution" value="2.06 A"/>
    <property type="chains" value="A/C=1-329"/>
</dbReference>
<dbReference type="PDB" id="5I2C">
    <property type="method" value="X-ray"/>
    <property type="resolution" value="1.80 A"/>
    <property type="chains" value="A/B/C/D=1-329"/>
</dbReference>
<dbReference type="PDBsum" id="5GS9"/>
<dbReference type="PDBsum" id="5GT7"/>
<dbReference type="PDBsum" id="5GT8"/>
<dbReference type="PDBsum" id="5GV2"/>
<dbReference type="PDBsum" id="5I2C"/>
<dbReference type="SMR" id="Q8WTX7"/>
<dbReference type="BioGRID" id="535021">
    <property type="interactions" value="20"/>
</dbReference>
<dbReference type="ComplexPortal" id="CPX-2665">
    <property type="entry name" value="CASTOR1 arginine-sensing complex"/>
</dbReference>
<dbReference type="ComplexPortal" id="CPX-2667">
    <property type="entry name" value="CASTOR1-CASTOR2 arginine binding complex"/>
</dbReference>
<dbReference type="DIP" id="DIP-62096N"/>
<dbReference type="FunCoup" id="Q8WTX7">
    <property type="interactions" value="569"/>
</dbReference>
<dbReference type="IntAct" id="Q8WTX7">
    <property type="interactions" value="12"/>
</dbReference>
<dbReference type="STRING" id="9606.ENSP00000384183"/>
<dbReference type="BindingDB" id="Q8WTX7"/>
<dbReference type="iPTMnet" id="Q8WTX7"/>
<dbReference type="PhosphoSitePlus" id="Q8WTX7"/>
<dbReference type="BioMuta" id="CASTOR1"/>
<dbReference type="DMDM" id="74730646"/>
<dbReference type="jPOST" id="Q8WTX7"/>
<dbReference type="MassIVE" id="Q8WTX7"/>
<dbReference type="PaxDb" id="9606-ENSP00000384183"/>
<dbReference type="PeptideAtlas" id="Q8WTX7"/>
<dbReference type="ProteomicsDB" id="74612"/>
<dbReference type="Pumba" id="Q8WTX7"/>
<dbReference type="TopDownProteomics" id="Q8WTX7"/>
<dbReference type="Antibodypedia" id="54095">
    <property type="antibodies" value="21 antibodies from 12 providers"/>
</dbReference>
<dbReference type="DNASU" id="652968"/>
<dbReference type="Ensembl" id="ENST00000407689.8">
    <property type="protein sequence ID" value="ENSP00000384183.4"/>
    <property type="gene ID" value="ENSG00000239282.8"/>
</dbReference>
<dbReference type="GeneID" id="652968"/>
<dbReference type="KEGG" id="hsa:652968"/>
<dbReference type="MANE-Select" id="ENST00000407689.8">
    <property type="protein sequence ID" value="ENSP00000384183.4"/>
    <property type="RefSeq nucleotide sequence ID" value="NM_001037666.3"/>
    <property type="RefSeq protein sequence ID" value="NP_001032755.1"/>
</dbReference>
<dbReference type="UCSC" id="uc003ahd.4">
    <property type="organism name" value="human"/>
</dbReference>
<dbReference type="AGR" id="HGNC:34423"/>
<dbReference type="CTD" id="652968"/>
<dbReference type="DisGeNET" id="652968"/>
<dbReference type="GeneCards" id="CASTOR1"/>
<dbReference type="HGNC" id="HGNC:34423">
    <property type="gene designation" value="CASTOR1"/>
</dbReference>
<dbReference type="HPA" id="ENSG00000239282">
    <property type="expression patterns" value="Tissue enhanced (esophagus)"/>
</dbReference>
<dbReference type="MIM" id="617034">
    <property type="type" value="gene"/>
</dbReference>
<dbReference type="neXtProt" id="NX_Q8WTX7"/>
<dbReference type="OpenTargets" id="ENSG00000239282"/>
<dbReference type="PharmGKB" id="PA164720260"/>
<dbReference type="VEuPathDB" id="HostDB:ENSG00000239282"/>
<dbReference type="eggNOG" id="ENOG502QV83">
    <property type="taxonomic scope" value="Eukaryota"/>
</dbReference>
<dbReference type="GeneTree" id="ENSGT00390000006208"/>
<dbReference type="InParanoid" id="Q8WTX7"/>
<dbReference type="OMA" id="HFTHPLI"/>
<dbReference type="OrthoDB" id="58529at2759"/>
<dbReference type="PAN-GO" id="Q8WTX7">
    <property type="GO annotations" value="4 GO annotations based on evolutionary models"/>
</dbReference>
<dbReference type="PhylomeDB" id="Q8WTX7"/>
<dbReference type="TreeFam" id="TF331648"/>
<dbReference type="PathwayCommons" id="Q8WTX7"/>
<dbReference type="Reactome" id="R-HSA-9639288">
    <property type="pathway name" value="Amino acids regulate mTORC1"/>
</dbReference>
<dbReference type="SignaLink" id="Q8WTX7"/>
<dbReference type="BioGRID-ORCS" id="652968">
    <property type="hits" value="16 hits in 1150 CRISPR screens"/>
</dbReference>
<dbReference type="ChiTaRS" id="GATSL3">
    <property type="organism name" value="human"/>
</dbReference>
<dbReference type="GenomeRNAi" id="652968"/>
<dbReference type="Pharos" id="Q8WTX7">
    <property type="development level" value="Tbio"/>
</dbReference>
<dbReference type="PRO" id="PR:Q8WTX7"/>
<dbReference type="Proteomes" id="UP000005640">
    <property type="component" value="Chromosome 22"/>
</dbReference>
<dbReference type="RNAct" id="Q8WTX7">
    <property type="molecule type" value="protein"/>
</dbReference>
<dbReference type="Bgee" id="ENSG00000239282">
    <property type="expression patterns" value="Expressed in lower esophagus mucosa and 95 other cell types or tissues"/>
</dbReference>
<dbReference type="ExpressionAtlas" id="Q8WTX7">
    <property type="expression patterns" value="baseline and differential"/>
</dbReference>
<dbReference type="GO" id="GO:0005829">
    <property type="term" value="C:cytosol"/>
    <property type="evidence" value="ECO:0000314"/>
    <property type="project" value="UniProtKB"/>
</dbReference>
<dbReference type="GO" id="GO:0034618">
    <property type="term" value="F:arginine binding"/>
    <property type="evidence" value="ECO:0000314"/>
    <property type="project" value="UniProtKB"/>
</dbReference>
<dbReference type="GO" id="GO:0042802">
    <property type="term" value="F:identical protein binding"/>
    <property type="evidence" value="ECO:0000314"/>
    <property type="project" value="UniProtKB"/>
</dbReference>
<dbReference type="GO" id="GO:0140299">
    <property type="term" value="F:molecular sensor activity"/>
    <property type="evidence" value="ECO:0000314"/>
    <property type="project" value="UniProt"/>
</dbReference>
<dbReference type="GO" id="GO:0140311">
    <property type="term" value="F:protein sequestering activity"/>
    <property type="evidence" value="ECO:0000314"/>
    <property type="project" value="UniProtKB"/>
</dbReference>
<dbReference type="GO" id="GO:0034198">
    <property type="term" value="P:cellular response to amino acid starvation"/>
    <property type="evidence" value="ECO:0000314"/>
    <property type="project" value="UniProt"/>
</dbReference>
<dbReference type="GO" id="GO:1903577">
    <property type="term" value="P:cellular response to L-arginine"/>
    <property type="evidence" value="ECO:0000314"/>
    <property type="project" value="UniProtKB"/>
</dbReference>
<dbReference type="GO" id="GO:1904262">
    <property type="term" value="P:negative regulation of TORC1 signaling"/>
    <property type="evidence" value="ECO:0000314"/>
    <property type="project" value="UniProtKB"/>
</dbReference>
<dbReference type="GO" id="GO:1904263">
    <property type="term" value="P:positive regulation of TORC1 signaling"/>
    <property type="evidence" value="ECO:0000314"/>
    <property type="project" value="UniProt"/>
</dbReference>
<dbReference type="FunFam" id="3.30.2130.10:FF:000003">
    <property type="entry name" value="Cytosolic arginine sensor for mTORC1 subunit 1"/>
    <property type="match status" value="1"/>
</dbReference>
<dbReference type="FunFam" id="3.30.2130.10:FF:000004">
    <property type="entry name" value="Cytosolic arginine sensor for mTORC1 subunit 1"/>
    <property type="match status" value="1"/>
</dbReference>
<dbReference type="Gene3D" id="3.30.2130.10">
    <property type="entry name" value="VC0802-like"/>
    <property type="match status" value="2"/>
</dbReference>
<dbReference type="InterPro" id="IPR045865">
    <property type="entry name" value="ACT-like_dom_sf"/>
</dbReference>
<dbReference type="InterPro" id="IPR049479">
    <property type="entry name" value="CASTOR1_ACT-like"/>
</dbReference>
<dbReference type="InterPro" id="IPR040778">
    <property type="entry name" value="CASTOR1_N"/>
</dbReference>
<dbReference type="InterPro" id="IPR027795">
    <property type="entry name" value="CASTOR_ACT_dom"/>
</dbReference>
<dbReference type="InterPro" id="IPR026249">
    <property type="entry name" value="CASTOR_fam"/>
</dbReference>
<dbReference type="InterPro" id="IPR051719">
    <property type="entry name" value="CASTOR_mTORC1"/>
</dbReference>
<dbReference type="PANTHER" id="PTHR31131">
    <property type="entry name" value="CHROMOSOME 1, WHOLE GENOME SHOTGUN SEQUENCE"/>
    <property type="match status" value="1"/>
</dbReference>
<dbReference type="PANTHER" id="PTHR31131:SF3">
    <property type="entry name" value="CYTOSOLIC ARGININE SENSOR FOR MTORC1 SUBUNIT 1"/>
    <property type="match status" value="1"/>
</dbReference>
<dbReference type="Pfam" id="PF13840">
    <property type="entry name" value="ACT_7"/>
    <property type="match status" value="2"/>
</dbReference>
<dbReference type="Pfam" id="PF21389">
    <property type="entry name" value="CASTOR1_ACT-like"/>
    <property type="match status" value="1"/>
</dbReference>
<dbReference type="Pfam" id="PF18700">
    <property type="entry name" value="Castor1_N"/>
    <property type="match status" value="1"/>
</dbReference>
<dbReference type="PRINTS" id="PR02078">
    <property type="entry name" value="GATSLIKEFMLY"/>
</dbReference>
<dbReference type="SUPFAM" id="SSF55021">
    <property type="entry name" value="ACT-like"/>
    <property type="match status" value="2"/>
</dbReference>
<name>CAST1_HUMAN</name>
<protein>
    <recommendedName>
        <fullName evidence="5">Cytosolic arginine sensor for mTORC1 subunit 1</fullName>
    </recommendedName>
    <alternativeName>
        <fullName evidence="8">Cellular arginine sensor for mTORC1 protein 1</fullName>
    </alternativeName>
    <alternativeName>
        <fullName evidence="7">GATS-like protein 3</fullName>
    </alternativeName>
</protein>
<organism>
    <name type="scientific">Homo sapiens</name>
    <name type="common">Human</name>
    <dbReference type="NCBI Taxonomy" id="9606"/>
    <lineage>
        <taxon>Eukaryota</taxon>
        <taxon>Metazoa</taxon>
        <taxon>Chordata</taxon>
        <taxon>Craniata</taxon>
        <taxon>Vertebrata</taxon>
        <taxon>Euteleostomi</taxon>
        <taxon>Mammalia</taxon>
        <taxon>Eutheria</taxon>
        <taxon>Euarchontoglires</taxon>
        <taxon>Primates</taxon>
        <taxon>Haplorrhini</taxon>
        <taxon>Catarrhini</taxon>
        <taxon>Hominidae</taxon>
        <taxon>Homo</taxon>
    </lineage>
</organism>
<gene>
    <name evidence="5 9" type="primary">CASTOR1</name>
    <name evidence="9" type="synonym">GATSL3</name>
</gene>
<sequence>MELHILEHRVRVLSVARPGLWLYTHPLIKLLFLPRRSRCKFFSLTETPEDYTLMVDEEGFKELPPSEFLQVAEATWLVLNVSSHSGAAVQAAGVTKIARSVIAPLAEHHVSVLMLSTYQTDFILVREQDLSVVIHTLAQEFDIYREVGGEPVPVTRDDSSNGFPRTQHGPSPTVHPIQSPQNRFCVLTLDPETLPAIATTLIDVLFYSHSTPKEAASSSPEPSSITFFAFSLIEGYISIVMDAETQKKFPSDLLLTSSSGELWRMVRIGGQPLGFDECGIVAQIAGPLAAADISAYYISTFNFDHALVPEDGIGSVIEVLQRRQEGLAS</sequence>
<proteinExistence type="evidence at protein level"/>
<evidence type="ECO:0000269" key="1">
    <source>
    </source>
</evidence>
<evidence type="ECO:0000269" key="2">
    <source>
    </source>
</evidence>
<evidence type="ECO:0000269" key="3">
    <source>
    </source>
</evidence>
<evidence type="ECO:0000269" key="4">
    <source>
    </source>
</evidence>
<evidence type="ECO:0000303" key="5">
    <source>
    </source>
</evidence>
<evidence type="ECO:0000303" key="6">
    <source>
    </source>
</evidence>
<evidence type="ECO:0000305" key="7"/>
<evidence type="ECO:0000305" key="8">
    <source>
    </source>
</evidence>
<evidence type="ECO:0000312" key="9">
    <source>
        <dbReference type="HGNC" id="HGNC:34423"/>
    </source>
</evidence>
<evidence type="ECO:0007744" key="10">
    <source>
        <dbReference type="PDB" id="5I2C"/>
    </source>
</evidence>
<evidence type="ECO:0007829" key="11">
    <source>
        <dbReference type="PDB" id="5GT7"/>
    </source>
</evidence>
<evidence type="ECO:0007829" key="12">
    <source>
        <dbReference type="PDB" id="5GT8"/>
    </source>
</evidence>
<evidence type="ECO:0007829" key="13">
    <source>
        <dbReference type="PDB" id="5I2C"/>
    </source>
</evidence>